<sequence length="414" mass="45394">MFPGAVIRKLAFSEEIYARYQAFTSFTAHVRGPVDIDAMSEAFDALLQAHPVFAAHLEEGPDGNHHIVANDLLHSGLVVIDGRRAENPHVQLDQRDSLFRLQLTLGESENLVTAYVHHSLADAHHLGSLLDELLSRYTDVVTTGDPGPITPEPAPQPAEDLLKRRGIKQSALTGFERFLPLLFAYDLPPIAEEMRKFEAPEPVPVTRCRLTSQETADLVSFSRDNGLSFNAVLAAAILLAEWRLRETPHVPIPYCYAVDLRFLLSPPVGATESTNPVGLATYLAEIGPDTDITELAADIVATFRADLSDGMIHQSALRSGRILEGTPPGLPPFILCTNVSTLPPIRTPEDVELVDFHSRIHCAMDVPFGFYACSIATDRLSIELHGSIPAPQLLLDAIRDILCSVPSEYGLFME</sequence>
<feature type="chain" id="PRO_0000332109" description="Phthiocerol/phthiodiolone dimycocerosyl transferase">
    <location>
        <begin position="1"/>
        <end position="414"/>
    </location>
</feature>
<feature type="active site" description="Proton acceptor" evidence="1">
    <location>
        <position position="118"/>
    </location>
</feature>
<feature type="site" description="Structural role in the organization of the active site" evidence="1">
    <location>
        <position position="122"/>
    </location>
</feature>
<feature type="site" description="Important for mas ACP domain recognition" evidence="1">
    <location>
        <position position="304"/>
    </location>
</feature>
<keyword id="KW-0012">Acyltransferase</keyword>
<keyword id="KW-0444">Lipid biosynthesis</keyword>
<keyword id="KW-0443">Lipid metabolism</keyword>
<keyword id="KW-0808">Transferase</keyword>
<proteinExistence type="inferred from homology"/>
<accession>A0PQ31</accession>
<reference key="1">
    <citation type="journal article" date="2007" name="Genome Res.">
        <title>Reductive evolution and niche adaptation inferred from the genome of Mycobacterium ulcerans, the causative agent of Buruli ulcer.</title>
        <authorList>
            <person name="Stinear T.P."/>
            <person name="Seemann T."/>
            <person name="Pidot S."/>
            <person name="Frigui W."/>
            <person name="Reysset G."/>
            <person name="Garnier T."/>
            <person name="Meurice G."/>
            <person name="Simon D."/>
            <person name="Bouchier C."/>
            <person name="Ma L."/>
            <person name="Tichit M."/>
            <person name="Porter J.L."/>
            <person name="Ryan J."/>
            <person name="Johnson P.D.R."/>
            <person name="Davies J.K."/>
            <person name="Jenkin G.A."/>
            <person name="Small P.L.C."/>
            <person name="Jones L.M."/>
            <person name="Tekaia F."/>
            <person name="Laval F."/>
            <person name="Daffe M."/>
            <person name="Parkhill J."/>
            <person name="Cole S.T."/>
        </authorList>
    </citation>
    <scope>NUCLEOTIDE SEQUENCE [LARGE SCALE GENOMIC DNA]</scope>
    <source>
        <strain>Agy99</strain>
    </source>
</reference>
<gene>
    <name type="primary">papA5</name>
    <name type="ordered locus">MUL_2011</name>
</gene>
<dbReference type="EC" id="2.3.1.282" evidence="2"/>
<dbReference type="EMBL" id="CP000325">
    <property type="protein sequence ID" value="ABL04450.1"/>
    <property type="molecule type" value="Genomic_DNA"/>
</dbReference>
<dbReference type="RefSeq" id="WP_011740069.1">
    <property type="nucleotide sequence ID" value="NC_008611.1"/>
</dbReference>
<dbReference type="SMR" id="A0PQ31"/>
<dbReference type="KEGG" id="mul:MUL_2011"/>
<dbReference type="eggNOG" id="COG1020">
    <property type="taxonomic scope" value="Bacteria"/>
</dbReference>
<dbReference type="HOGENOM" id="CLU_050374_1_0_11"/>
<dbReference type="Proteomes" id="UP000000765">
    <property type="component" value="Chromosome"/>
</dbReference>
<dbReference type="GO" id="GO:0016746">
    <property type="term" value="F:acyltransferase activity"/>
    <property type="evidence" value="ECO:0007669"/>
    <property type="project" value="UniProtKB-KW"/>
</dbReference>
<dbReference type="GO" id="GO:0006629">
    <property type="term" value="P:lipid metabolic process"/>
    <property type="evidence" value="ECO:0007669"/>
    <property type="project" value="UniProtKB-KW"/>
</dbReference>
<dbReference type="Gene3D" id="3.30.559.10">
    <property type="entry name" value="Chloramphenicol acetyltransferase-like domain"/>
    <property type="match status" value="1"/>
</dbReference>
<dbReference type="Gene3D" id="3.30.559.30">
    <property type="entry name" value="Nonribosomal peptide synthetase, condensation domain"/>
    <property type="match status" value="1"/>
</dbReference>
<dbReference type="InterPro" id="IPR023213">
    <property type="entry name" value="CAT-like_dom_sf"/>
</dbReference>
<dbReference type="InterPro" id="IPR031641">
    <property type="entry name" value="PapA_C"/>
</dbReference>
<dbReference type="NCBIfam" id="NF006790">
    <property type="entry name" value="PRK09294.1-4"/>
    <property type="match status" value="1"/>
</dbReference>
<dbReference type="Pfam" id="PF16911">
    <property type="entry name" value="PapA_C"/>
    <property type="match status" value="1"/>
</dbReference>
<dbReference type="SUPFAM" id="SSF52777">
    <property type="entry name" value="CoA-dependent acyltransferases"/>
    <property type="match status" value="2"/>
</dbReference>
<comment type="function">
    <text evidence="2">Catalyzes diesterification of phthiocerol, phthiodiolone, and phenolphthiocerol with mycocerosic acids, the final step in the phthiocerol, phthiodiolone and phenolphthiocerol dimycocerosate esters (PDIM) synthesis. Can directly transfer the mycocerosate bound to the mycocerosic acid synthase (mas) onto the substrate alcohols.</text>
</comment>
<comment type="catalytic activity">
    <reaction evidence="2">
        <text>2 a mycocerosyl-[mycocerosic acid synthase] + a phthiocerol = a dimycocerosyl phthiocerol + 2 holo-[mycocerosic acid synthase].</text>
        <dbReference type="EC" id="2.3.1.282"/>
    </reaction>
</comment>
<comment type="catalytic activity">
    <reaction evidence="2">
        <text>2 a mycocerosyl-[mycocerosic acid synthase] + a phthiodiolone = a dimycocerosyl phthiodiolone + 2 holo-[mycocerosic acid synthase].</text>
        <dbReference type="EC" id="2.3.1.282"/>
    </reaction>
</comment>
<comment type="catalytic activity">
    <reaction evidence="2">
        <text>2 a mycocerosyl-[mycocerosic acid synthase] + a phenolphthiocerol = a dimycocerosyl phenolphthiocerol + 2 holo-[mycocerosic acid synthase].</text>
        <dbReference type="EC" id="2.3.1.282"/>
    </reaction>
</comment>
<comment type="subunit">
    <text evidence="2">Monomer. Interacts directly with the acyl carrier protein (ACP) domain of the mycocerosic acid synthase (mas) protein.</text>
</comment>
<comment type="domain">
    <text evidence="2">Consists of two structural domains that are related to each other.</text>
</comment>
<comment type="similarity">
    <text evidence="3">Belongs to the acyltransferase PapA5 family.</text>
</comment>
<name>PAPA5_MYCUA</name>
<evidence type="ECO:0000250" key="1"/>
<evidence type="ECO:0000250" key="2">
    <source>
        <dbReference type="UniProtKB" id="P9WIN5"/>
    </source>
</evidence>
<evidence type="ECO:0000305" key="3"/>
<protein>
    <recommendedName>
        <fullName>Phthiocerol/phthiodiolone dimycocerosyl transferase</fullName>
        <ecNumber evidence="2">2.3.1.282</ecNumber>
    </recommendedName>
    <alternativeName>
        <fullName>Acyltransferase PapA5</fullName>
    </alternativeName>
    <alternativeName>
        <fullName>Phthiocerol/phthiodiolone O-acyltransferase</fullName>
    </alternativeName>
    <alternativeName>
        <fullName>Polyketide synthase-associated protein A5</fullName>
    </alternativeName>
</protein>
<organism>
    <name type="scientific">Mycobacterium ulcerans (strain Agy99)</name>
    <dbReference type="NCBI Taxonomy" id="362242"/>
    <lineage>
        <taxon>Bacteria</taxon>
        <taxon>Bacillati</taxon>
        <taxon>Actinomycetota</taxon>
        <taxon>Actinomycetes</taxon>
        <taxon>Mycobacteriales</taxon>
        <taxon>Mycobacteriaceae</taxon>
        <taxon>Mycobacterium</taxon>
        <taxon>Mycobacterium ulcerans group</taxon>
    </lineage>
</organism>